<protein>
    <recommendedName>
        <fullName>Superoxide dismutase [Fe]</fullName>
        <ecNumber>1.15.1.1</ecNumber>
    </recommendedName>
</protein>
<gene>
    <name type="primary">sod</name>
    <name type="ordered locus">MTH_160</name>
</gene>
<keyword id="KW-0002">3D-structure</keyword>
<keyword id="KW-0408">Iron</keyword>
<keyword id="KW-0479">Metal-binding</keyword>
<keyword id="KW-0560">Oxidoreductase</keyword>
<keyword id="KW-1185">Reference proteome</keyword>
<dbReference type="EC" id="1.15.1.1"/>
<dbReference type="EMBL" id="D00614">
    <property type="protein sequence ID" value="BAA00489.1"/>
    <property type="molecule type" value="Genomic_DNA"/>
</dbReference>
<dbReference type="EMBL" id="AE000666">
    <property type="protein sequence ID" value="AAB84666.1"/>
    <property type="molecule type" value="Genomic_DNA"/>
</dbReference>
<dbReference type="PIR" id="F69080">
    <property type="entry name" value="F69080"/>
</dbReference>
<dbReference type="PDB" id="1MA1">
    <property type="method" value="X-ray"/>
    <property type="resolution" value="2.60 A"/>
    <property type="chains" value="A/B/C/D/E/F=1-205"/>
</dbReference>
<dbReference type="PDBsum" id="1MA1"/>
<dbReference type="SMR" id="P18868"/>
<dbReference type="STRING" id="187420.MTH_160"/>
<dbReference type="PaxDb" id="187420-MTH_160"/>
<dbReference type="EnsemblBacteria" id="AAB84666">
    <property type="protein sequence ID" value="AAB84666"/>
    <property type="gene ID" value="MTH_160"/>
</dbReference>
<dbReference type="KEGG" id="mth:MTH_160"/>
<dbReference type="PATRIC" id="fig|187420.15.peg.132"/>
<dbReference type="HOGENOM" id="CLU_031625_2_2_2"/>
<dbReference type="InParanoid" id="P18868"/>
<dbReference type="EvolutionaryTrace" id="P18868"/>
<dbReference type="Proteomes" id="UP000005223">
    <property type="component" value="Chromosome"/>
</dbReference>
<dbReference type="GO" id="GO:0046872">
    <property type="term" value="F:metal ion binding"/>
    <property type="evidence" value="ECO:0007669"/>
    <property type="project" value="UniProtKB-KW"/>
</dbReference>
<dbReference type="GO" id="GO:0004784">
    <property type="term" value="F:superoxide dismutase activity"/>
    <property type="evidence" value="ECO:0007669"/>
    <property type="project" value="UniProtKB-EC"/>
</dbReference>
<dbReference type="FunFam" id="1.10.287.990:FF:000001">
    <property type="entry name" value="Superoxide dismutase"/>
    <property type="match status" value="1"/>
</dbReference>
<dbReference type="FunFam" id="3.55.40.20:FF:000004">
    <property type="entry name" value="Superoxide dismutase [Fe]"/>
    <property type="match status" value="1"/>
</dbReference>
<dbReference type="Gene3D" id="1.10.287.990">
    <property type="entry name" value="Fe,Mn superoxide dismutase (SOD) domain"/>
    <property type="match status" value="1"/>
</dbReference>
<dbReference type="Gene3D" id="3.55.40.20">
    <property type="entry name" value="Iron/manganese superoxide dismutase, C-terminal domain"/>
    <property type="match status" value="1"/>
</dbReference>
<dbReference type="InterPro" id="IPR050265">
    <property type="entry name" value="Fe/Mn_Superoxide_Dismutase"/>
</dbReference>
<dbReference type="InterPro" id="IPR001189">
    <property type="entry name" value="Mn/Fe_SOD"/>
</dbReference>
<dbReference type="InterPro" id="IPR019833">
    <property type="entry name" value="Mn/Fe_SOD_BS"/>
</dbReference>
<dbReference type="InterPro" id="IPR019832">
    <property type="entry name" value="Mn/Fe_SOD_C"/>
</dbReference>
<dbReference type="InterPro" id="IPR019831">
    <property type="entry name" value="Mn/Fe_SOD_N"/>
</dbReference>
<dbReference type="InterPro" id="IPR036324">
    <property type="entry name" value="Mn/Fe_SOD_N_sf"/>
</dbReference>
<dbReference type="InterPro" id="IPR036314">
    <property type="entry name" value="SOD_C_sf"/>
</dbReference>
<dbReference type="PANTHER" id="PTHR11404">
    <property type="entry name" value="SUPEROXIDE DISMUTASE 2"/>
    <property type="match status" value="1"/>
</dbReference>
<dbReference type="PANTHER" id="PTHR11404:SF6">
    <property type="entry name" value="SUPEROXIDE DISMUTASE [MN], MITOCHONDRIAL"/>
    <property type="match status" value="1"/>
</dbReference>
<dbReference type="Pfam" id="PF02777">
    <property type="entry name" value="Sod_Fe_C"/>
    <property type="match status" value="1"/>
</dbReference>
<dbReference type="Pfam" id="PF00081">
    <property type="entry name" value="Sod_Fe_N"/>
    <property type="match status" value="1"/>
</dbReference>
<dbReference type="PIRSF" id="PIRSF000349">
    <property type="entry name" value="SODismutase"/>
    <property type="match status" value="1"/>
</dbReference>
<dbReference type="PRINTS" id="PR01703">
    <property type="entry name" value="MNSODISMTASE"/>
</dbReference>
<dbReference type="SUPFAM" id="SSF54719">
    <property type="entry name" value="Fe,Mn superoxide dismutase (SOD), C-terminal domain"/>
    <property type="match status" value="1"/>
</dbReference>
<dbReference type="SUPFAM" id="SSF46609">
    <property type="entry name" value="Fe,Mn superoxide dismutase (SOD), N-terminal domain"/>
    <property type="match status" value="1"/>
</dbReference>
<dbReference type="PROSITE" id="PS00088">
    <property type="entry name" value="SOD_MN"/>
    <property type="match status" value="1"/>
</dbReference>
<organism>
    <name type="scientific">Methanothermobacter thermautotrophicus (strain ATCC 29096 / DSM 1053 / JCM 10044 / NBRC 100330 / Delta H)</name>
    <name type="common">Methanobacterium thermoautotrophicum</name>
    <dbReference type="NCBI Taxonomy" id="187420"/>
    <lineage>
        <taxon>Archaea</taxon>
        <taxon>Methanobacteriati</taxon>
        <taxon>Methanobacteriota</taxon>
        <taxon>Methanomada group</taxon>
        <taxon>Methanobacteria</taxon>
        <taxon>Methanobacteriales</taxon>
        <taxon>Methanobacteriaceae</taxon>
        <taxon>Methanothermobacter</taxon>
    </lineage>
</organism>
<comment type="function">
    <text>Destroys superoxide anion radicals which are normally produced within the cells and which are toxic to biological systems.</text>
</comment>
<comment type="catalytic activity">
    <reaction>
        <text>2 superoxide + 2 H(+) = H2O2 + O2</text>
        <dbReference type="Rhea" id="RHEA:20696"/>
        <dbReference type="ChEBI" id="CHEBI:15378"/>
        <dbReference type="ChEBI" id="CHEBI:15379"/>
        <dbReference type="ChEBI" id="CHEBI:16240"/>
        <dbReference type="ChEBI" id="CHEBI:18421"/>
        <dbReference type="EC" id="1.15.1.1"/>
    </reaction>
</comment>
<comment type="cofactor">
    <cofactor>
        <name>Fe cation</name>
        <dbReference type="ChEBI" id="CHEBI:24875"/>
    </cofactor>
    <text>Binds 1 Fe cation per subunit.</text>
</comment>
<comment type="subunit">
    <text>Homotetramer.</text>
</comment>
<comment type="similarity">
    <text evidence="1">Belongs to the iron/manganese superoxide dismutase family.</text>
</comment>
<sequence>MNDLEKKFYELPELPYPYDALEPHISREQLTIHHQKHHQAYVDGANALLRKLDEARESDTDVDIKAALKELSFHVGGYVLHLFFWGNMGPADECGGEPSGKLAEYIEKDFGSFERFRKEFSQAAISAEGSGWAVLTYCQRTDRLFIMQVEKHNVNVIPHFRILLVLDVWEHAYYIDYRNVRPDYVEAFWNIVNWKEVEKRFEDIL</sequence>
<proteinExistence type="evidence at protein level"/>
<reference key="1">
    <citation type="journal article" date="1990" name="Arch. Biochem. Biophys.">
        <title>Characterization of a superoxide dismutase gene from the archaebacterium Methanobacterium thermoautotrophicum.</title>
        <authorList>
            <person name="Takao M."/>
            <person name="Oikawa A."/>
            <person name="Yasui A."/>
        </authorList>
    </citation>
    <scope>NUCLEOTIDE SEQUENCE [GENOMIC DNA]</scope>
</reference>
<reference key="2">
    <citation type="journal article" date="1997" name="J. Bacteriol.">
        <title>Complete genome sequence of Methanobacterium thermoautotrophicum deltaH: functional analysis and comparative genomics.</title>
        <authorList>
            <person name="Smith D.R."/>
            <person name="Doucette-Stamm L.A."/>
            <person name="Deloughery C."/>
            <person name="Lee H.-M."/>
            <person name="Dubois J."/>
            <person name="Aldredge T."/>
            <person name="Bashirzadeh R."/>
            <person name="Blakely D."/>
            <person name="Cook R."/>
            <person name="Gilbert K."/>
            <person name="Harrison D."/>
            <person name="Hoang L."/>
            <person name="Keagle P."/>
            <person name="Lumm W."/>
            <person name="Pothier B."/>
            <person name="Qiu D."/>
            <person name="Spadafora R."/>
            <person name="Vicare R."/>
            <person name="Wang Y."/>
            <person name="Wierzbowski J."/>
            <person name="Gibson R."/>
            <person name="Jiwani N."/>
            <person name="Caruso A."/>
            <person name="Bush D."/>
            <person name="Safer H."/>
            <person name="Patwell D."/>
            <person name="Prabhakar S."/>
            <person name="McDougall S."/>
            <person name="Shimer G."/>
            <person name="Goyal A."/>
            <person name="Pietrovski S."/>
            <person name="Church G.M."/>
            <person name="Daniels C.J."/>
            <person name="Mao J.-I."/>
            <person name="Rice P."/>
            <person name="Noelling J."/>
            <person name="Reeve J.N."/>
        </authorList>
    </citation>
    <scope>NUCLEOTIDE SEQUENCE [LARGE SCALE GENOMIC DNA]</scope>
    <source>
        <strain>ATCC 29096 / DSM 1053 / JCM 10044 / NBRC 100330 / Delta H</strain>
    </source>
</reference>
<reference key="3">
    <citation type="journal article" date="1991" name="J. Biol. Chem.">
        <title>Unique characteristics of superoxide dismutase of a strictly anaerobic archaebacterium Methanobacterium thermoautotrophicum.</title>
        <authorList>
            <person name="Takao M."/>
            <person name="Yasui A."/>
            <person name="Oikawa A."/>
        </authorList>
    </citation>
    <scope>CHARACTERIZATION</scope>
</reference>
<reference key="4">
    <citation type="journal article" date="1999" name="Inorg. Chem.">
        <title>Thermochromic conformational change of Methanobacterium thermoautotrophicum iron superoxide dismutase.</title>
        <authorList>
            <person name="Renault J.P."/>
            <person name="Morgenstern-Badarau I."/>
            <person name="Piccioli M."/>
        </authorList>
    </citation>
    <scope>STRUCTURE BY NMR</scope>
</reference>
<reference key="5">
    <citation type="journal article" date="2000" name="Inorg. Chem.">
        <title>EPR and ligand field studies of iron superoxide dismutases and iron-substituted manganese superoxide dismutases: relationships between electronic structure of the active site and activity.</title>
        <authorList>
            <person name="Renault J.P."/>
            <person name="Verchere-Beaur C."/>
            <person name="Morgenstern-Badarau I."/>
            <person name="Yamakura F."/>
            <person name="Gerloch M."/>
        </authorList>
    </citation>
    <scope>EPR SPECTROSCOPY</scope>
</reference>
<accession>P18868</accession>
<name>SODF_METTH</name>
<feature type="chain" id="PRO_0000160006" description="Superoxide dismutase [Fe]">
    <location>
        <begin position="1"/>
        <end position="205"/>
    </location>
</feature>
<feature type="binding site">
    <location>
        <position position="33"/>
    </location>
    <ligand>
        <name>Fe cation</name>
        <dbReference type="ChEBI" id="CHEBI:24875"/>
    </ligand>
</feature>
<feature type="binding site">
    <location>
        <position position="81"/>
    </location>
    <ligand>
        <name>Fe cation</name>
        <dbReference type="ChEBI" id="CHEBI:24875"/>
    </ligand>
</feature>
<feature type="binding site">
    <location>
        <position position="167"/>
    </location>
    <ligand>
        <name>Fe cation</name>
        <dbReference type="ChEBI" id="CHEBI:24875"/>
    </ligand>
</feature>
<feature type="binding site">
    <location>
        <position position="171"/>
    </location>
    <ligand>
        <name>Fe cation</name>
        <dbReference type="ChEBI" id="CHEBI:24875"/>
    </ligand>
</feature>
<feature type="turn" evidence="2">
    <location>
        <begin position="18"/>
        <end position="24"/>
    </location>
</feature>
<feature type="helix" evidence="2">
    <location>
        <begin position="27"/>
        <end position="35"/>
    </location>
</feature>
<feature type="helix" evidence="2">
    <location>
        <begin position="37"/>
        <end position="57"/>
    </location>
</feature>
<feature type="helix" evidence="2">
    <location>
        <begin position="64"/>
        <end position="86"/>
    </location>
</feature>
<feature type="turn" evidence="2">
    <location>
        <begin position="91"/>
        <end position="93"/>
    </location>
</feature>
<feature type="helix" evidence="2">
    <location>
        <begin position="100"/>
        <end position="110"/>
    </location>
</feature>
<feature type="helix" evidence="2">
    <location>
        <begin position="113"/>
        <end position="125"/>
    </location>
</feature>
<feature type="strand" evidence="2">
    <location>
        <begin position="128"/>
        <end position="138"/>
    </location>
</feature>
<feature type="turn" evidence="2">
    <location>
        <begin position="139"/>
        <end position="142"/>
    </location>
</feature>
<feature type="strand" evidence="2">
    <location>
        <begin position="143"/>
        <end position="150"/>
    </location>
</feature>
<feature type="turn" evidence="2">
    <location>
        <begin position="151"/>
        <end position="153"/>
    </location>
</feature>
<feature type="strand" evidence="2">
    <location>
        <begin position="163"/>
        <end position="167"/>
    </location>
</feature>
<feature type="helix" evidence="2">
    <location>
        <begin position="170"/>
        <end position="172"/>
    </location>
</feature>
<feature type="helix" evidence="2">
    <location>
        <begin position="174"/>
        <end position="177"/>
    </location>
</feature>
<feature type="helix" evidence="2">
    <location>
        <begin position="181"/>
        <end position="188"/>
    </location>
</feature>
<feature type="turn" evidence="2">
    <location>
        <begin position="189"/>
        <end position="191"/>
    </location>
</feature>
<feature type="helix" evidence="2">
    <location>
        <begin position="194"/>
        <end position="202"/>
    </location>
</feature>
<evidence type="ECO:0000305" key="1"/>
<evidence type="ECO:0007829" key="2">
    <source>
        <dbReference type="PDB" id="1MA1"/>
    </source>
</evidence>